<name>LRAD4_HUMAN</name>
<dbReference type="EMBL" id="AF009424">
    <property type="protein sequence ID" value="AAC52023.1"/>
    <property type="molecule type" value="mRNA"/>
</dbReference>
<dbReference type="EMBL" id="AF009425">
    <property type="protein sequence ID" value="AAC52024.1"/>
    <property type="molecule type" value="mRNA"/>
</dbReference>
<dbReference type="EMBL" id="AF009426">
    <property type="protein sequence ID" value="AAC52025.1"/>
    <property type="molecule type" value="mRNA"/>
</dbReference>
<dbReference type="EMBL" id="AF009427">
    <property type="protein sequence ID" value="AAC52026.1"/>
    <property type="molecule type" value="mRNA"/>
</dbReference>
<dbReference type="EMBL" id="AK055028">
    <property type="protein sequence ID" value="BAG51451.1"/>
    <property type="molecule type" value="mRNA"/>
</dbReference>
<dbReference type="EMBL" id="AP001010">
    <property type="status" value="NOT_ANNOTATED_CDS"/>
    <property type="molecule type" value="Genomic_DNA"/>
</dbReference>
<dbReference type="EMBL" id="AP002439">
    <property type="status" value="NOT_ANNOTATED_CDS"/>
    <property type="molecule type" value="Genomic_DNA"/>
</dbReference>
<dbReference type="EMBL" id="AP002505">
    <property type="status" value="NOT_ANNOTATED_CDS"/>
    <property type="molecule type" value="Genomic_DNA"/>
</dbReference>
<dbReference type="EMBL" id="AP005131">
    <property type="status" value="NOT_ANNOTATED_CDS"/>
    <property type="molecule type" value="Genomic_DNA"/>
</dbReference>
<dbReference type="EMBL" id="CH471113">
    <property type="protein sequence ID" value="EAX01514.1"/>
    <property type="molecule type" value="Genomic_DNA"/>
</dbReference>
<dbReference type="EMBL" id="BC029958">
    <property type="status" value="NOT_ANNOTATED_CDS"/>
    <property type="molecule type" value="mRNA"/>
</dbReference>
<dbReference type="EMBL" id="BC030199">
    <property type="protein sequence ID" value="AAH30199.1"/>
    <property type="molecule type" value="mRNA"/>
</dbReference>
<dbReference type="EMBL" id="BC066971">
    <property type="protein sequence ID" value="AAH66971.1"/>
    <property type="molecule type" value="mRNA"/>
</dbReference>
<dbReference type="EMBL" id="BX114947">
    <property type="status" value="NOT_ANNOTATED_CDS"/>
    <property type="molecule type" value="mRNA"/>
</dbReference>
<dbReference type="CCDS" id="CCDS32793.1">
    <molecule id="O15165-1"/>
</dbReference>
<dbReference type="CCDS" id="CCDS32794.1">
    <molecule id="O15165-2"/>
</dbReference>
<dbReference type="CCDS" id="CCDS32795.1">
    <molecule id="O15165-6"/>
</dbReference>
<dbReference type="CCDS" id="CCDS42415.1">
    <molecule id="O15165-7"/>
</dbReference>
<dbReference type="CCDS" id="CCDS62392.1">
    <molecule id="O15165-5"/>
</dbReference>
<dbReference type="RefSeq" id="NP_001003674.1">
    <molecule id="O15165-6"/>
    <property type="nucleotide sequence ID" value="NM_001003674.3"/>
</dbReference>
<dbReference type="RefSeq" id="NP_001003675.1">
    <molecule id="O15165-7"/>
    <property type="nucleotide sequence ID" value="NM_001003675.3"/>
</dbReference>
<dbReference type="RefSeq" id="NP_001263178.1">
    <molecule id="O15165-5"/>
    <property type="nucleotide sequence ID" value="NM_001276249.1"/>
</dbReference>
<dbReference type="RefSeq" id="NP_001263180.1">
    <molecule id="O15165-8"/>
    <property type="nucleotide sequence ID" value="NM_001276251.2"/>
</dbReference>
<dbReference type="RefSeq" id="NP_001365027.1">
    <molecule id="O15165-1"/>
    <property type="nucleotide sequence ID" value="NM_001378098.1"/>
</dbReference>
<dbReference type="RefSeq" id="NP_001365028.1">
    <molecule id="O15165-1"/>
    <property type="nucleotide sequence ID" value="NM_001378099.1"/>
</dbReference>
<dbReference type="RefSeq" id="NP_001365029.1">
    <molecule id="O15165-1"/>
    <property type="nucleotide sequence ID" value="NM_001378100.1"/>
</dbReference>
<dbReference type="RefSeq" id="NP_001365030.1">
    <molecule id="O15165-2"/>
    <property type="nucleotide sequence ID" value="NM_001378101.1"/>
</dbReference>
<dbReference type="RefSeq" id="NP_001381591.1">
    <molecule id="O15165-1"/>
    <property type="nucleotide sequence ID" value="NM_001394662.1"/>
</dbReference>
<dbReference type="RefSeq" id="NP_001381592.1">
    <molecule id="O15165-1"/>
    <property type="nucleotide sequence ID" value="NM_001394663.1"/>
</dbReference>
<dbReference type="RefSeq" id="NP_001381593.1">
    <molecule id="O15165-2"/>
    <property type="nucleotide sequence ID" value="NM_001394664.1"/>
</dbReference>
<dbReference type="RefSeq" id="NP_001381594.1">
    <molecule id="O15165-2"/>
    <property type="nucleotide sequence ID" value="NM_001394665.1"/>
</dbReference>
<dbReference type="RefSeq" id="NP_852146.1">
    <molecule id="O15165-1"/>
    <property type="nucleotide sequence ID" value="NM_181481.5"/>
</dbReference>
<dbReference type="RefSeq" id="NP_852147.1">
    <molecule id="O15165-2"/>
    <property type="nucleotide sequence ID" value="NM_181482.5"/>
</dbReference>
<dbReference type="RefSeq" id="XP_005258197.1">
    <property type="nucleotide sequence ID" value="XM_005258140.1"/>
</dbReference>
<dbReference type="RefSeq" id="XP_006722416.1">
    <molecule id="O15165-1"/>
    <property type="nucleotide sequence ID" value="XM_006722353.2"/>
</dbReference>
<dbReference type="RefSeq" id="XP_006722417.1">
    <molecule id="O15165-1"/>
    <property type="nucleotide sequence ID" value="XM_006722354.2"/>
</dbReference>
<dbReference type="RefSeq" id="XP_011524040.1">
    <property type="nucleotide sequence ID" value="XM_011525738.1"/>
</dbReference>
<dbReference type="RefSeq" id="XP_016881454.1">
    <property type="nucleotide sequence ID" value="XM_017025965.1"/>
</dbReference>
<dbReference type="RefSeq" id="XP_016881455.1">
    <property type="nucleotide sequence ID" value="XM_017025966.1"/>
</dbReference>
<dbReference type="RefSeq" id="XP_016881456.1">
    <property type="nucleotide sequence ID" value="XM_017025967.1"/>
</dbReference>
<dbReference type="RefSeq" id="XP_016881457.1">
    <property type="nucleotide sequence ID" value="XM_017025968.1"/>
</dbReference>
<dbReference type="RefSeq" id="XP_016881458.1">
    <molecule id="O15165-5"/>
    <property type="nucleotide sequence ID" value="XM_017025969.2"/>
</dbReference>
<dbReference type="RefSeq" id="XP_016881459.1">
    <molecule id="O15165-5"/>
    <property type="nucleotide sequence ID" value="XM_017025970.2"/>
</dbReference>
<dbReference type="RefSeq" id="XP_016881460.1">
    <property type="nucleotide sequence ID" value="XM_017025971.1"/>
</dbReference>
<dbReference type="RefSeq" id="XP_024307018.1">
    <molecule id="O15165-1"/>
    <property type="nucleotide sequence ID" value="XM_024451250.2"/>
</dbReference>
<dbReference type="RefSeq" id="XP_024307019.1">
    <molecule id="O15165-1"/>
    <property type="nucleotide sequence ID" value="XM_024451251.2"/>
</dbReference>
<dbReference type="RefSeq" id="XP_024307020.1">
    <molecule id="O15165-1"/>
    <property type="nucleotide sequence ID" value="XM_024451252.2"/>
</dbReference>
<dbReference type="RefSeq" id="XP_024307022.1">
    <molecule id="O15165-1"/>
    <property type="nucleotide sequence ID" value="XM_024451254.2"/>
</dbReference>
<dbReference type="RefSeq" id="XP_024307023.1">
    <molecule id="O15165-1"/>
    <property type="nucleotide sequence ID" value="XM_024451255.2"/>
</dbReference>
<dbReference type="RefSeq" id="XP_024307024.1">
    <molecule id="O15165-1"/>
    <property type="nucleotide sequence ID" value="XM_024451256.2"/>
</dbReference>
<dbReference type="RefSeq" id="XP_024307026.1">
    <molecule id="O15165-1"/>
    <property type="nucleotide sequence ID" value="XM_024451258.2"/>
</dbReference>
<dbReference type="RefSeq" id="XP_047293728.1">
    <molecule id="O15165-1"/>
    <property type="nucleotide sequence ID" value="XM_047437772.1"/>
</dbReference>
<dbReference type="RefSeq" id="XP_047293729.1">
    <molecule id="O15165-1"/>
    <property type="nucleotide sequence ID" value="XM_047437773.1"/>
</dbReference>
<dbReference type="RefSeq" id="XP_047293733.1">
    <molecule id="O15165-2"/>
    <property type="nucleotide sequence ID" value="XM_047437777.1"/>
</dbReference>
<dbReference type="RefSeq" id="XP_047293734.1">
    <molecule id="O15165-2"/>
    <property type="nucleotide sequence ID" value="XM_047437778.1"/>
</dbReference>
<dbReference type="RefSeq" id="XP_047293742.1">
    <molecule id="O15165-5"/>
    <property type="nucleotide sequence ID" value="XM_047437786.1"/>
</dbReference>
<dbReference type="RefSeq" id="XP_047293743.1">
    <molecule id="O15165-5"/>
    <property type="nucleotide sequence ID" value="XM_047437787.1"/>
</dbReference>
<dbReference type="RefSeq" id="XP_047293744.1">
    <molecule id="O15165-5"/>
    <property type="nucleotide sequence ID" value="XM_047437788.1"/>
</dbReference>
<dbReference type="RefSeq" id="XP_047293745.1">
    <molecule id="O15165-5"/>
    <property type="nucleotide sequence ID" value="XM_047437789.1"/>
</dbReference>
<dbReference type="RefSeq" id="XP_047293746.1">
    <molecule id="O15165-5"/>
    <property type="nucleotide sequence ID" value="XM_047437790.1"/>
</dbReference>
<dbReference type="RefSeq" id="XP_047293747.1">
    <molecule id="O15165-5"/>
    <property type="nucleotide sequence ID" value="XM_047437791.1"/>
</dbReference>
<dbReference type="RefSeq" id="XP_047293748.1">
    <molecule id="O15165-5"/>
    <property type="nucleotide sequence ID" value="XM_047437792.1"/>
</dbReference>
<dbReference type="RefSeq" id="XP_054175027.1">
    <molecule id="O15165-1"/>
    <property type="nucleotide sequence ID" value="XM_054319052.1"/>
</dbReference>
<dbReference type="RefSeq" id="XP_054175028.1">
    <molecule id="O15165-1"/>
    <property type="nucleotide sequence ID" value="XM_054319053.1"/>
</dbReference>
<dbReference type="RefSeq" id="XP_054175029.1">
    <molecule id="O15165-1"/>
    <property type="nucleotide sequence ID" value="XM_054319054.1"/>
</dbReference>
<dbReference type="RefSeq" id="XP_054175030.1">
    <molecule id="O15165-1"/>
    <property type="nucleotide sequence ID" value="XM_054319055.1"/>
</dbReference>
<dbReference type="RefSeq" id="XP_054175031.1">
    <molecule id="O15165-1"/>
    <property type="nucleotide sequence ID" value="XM_054319056.1"/>
</dbReference>
<dbReference type="RefSeq" id="XP_054175032.1">
    <molecule id="O15165-1"/>
    <property type="nucleotide sequence ID" value="XM_054319057.1"/>
</dbReference>
<dbReference type="RefSeq" id="XP_054175033.1">
    <molecule id="O15165-1"/>
    <property type="nucleotide sequence ID" value="XM_054319058.1"/>
</dbReference>
<dbReference type="RefSeq" id="XP_054175034.1">
    <molecule id="O15165-1"/>
    <property type="nucleotide sequence ID" value="XM_054319059.1"/>
</dbReference>
<dbReference type="RefSeq" id="XP_054175035.1">
    <molecule id="O15165-1"/>
    <property type="nucleotide sequence ID" value="XM_054319060.1"/>
</dbReference>
<dbReference type="RefSeq" id="XP_054175036.1">
    <molecule id="O15165-1"/>
    <property type="nucleotide sequence ID" value="XM_054319061.1"/>
</dbReference>
<dbReference type="RefSeq" id="XP_054175037.1">
    <molecule id="O15165-1"/>
    <property type="nucleotide sequence ID" value="XM_054319062.1"/>
</dbReference>
<dbReference type="RefSeq" id="XP_054175041.1">
    <molecule id="O15165-2"/>
    <property type="nucleotide sequence ID" value="XM_054319066.1"/>
</dbReference>
<dbReference type="RefSeq" id="XP_054175042.1">
    <molecule id="O15165-2"/>
    <property type="nucleotide sequence ID" value="XM_054319067.1"/>
</dbReference>
<dbReference type="RefSeq" id="XP_054175052.1">
    <molecule id="O15165-5"/>
    <property type="nucleotide sequence ID" value="XM_054319077.1"/>
</dbReference>
<dbReference type="RefSeq" id="XP_054175053.1">
    <molecule id="O15165-5"/>
    <property type="nucleotide sequence ID" value="XM_054319078.1"/>
</dbReference>
<dbReference type="RefSeq" id="XP_054175054.1">
    <molecule id="O15165-5"/>
    <property type="nucleotide sequence ID" value="XM_054319079.1"/>
</dbReference>
<dbReference type="RefSeq" id="XP_054175055.1">
    <molecule id="O15165-5"/>
    <property type="nucleotide sequence ID" value="XM_054319080.1"/>
</dbReference>
<dbReference type="RefSeq" id="XP_054175056.1">
    <molecule id="O15165-5"/>
    <property type="nucleotide sequence ID" value="XM_054319081.1"/>
</dbReference>
<dbReference type="RefSeq" id="XP_054175057.1">
    <molecule id="O15165-5"/>
    <property type="nucleotide sequence ID" value="XM_054319082.1"/>
</dbReference>
<dbReference type="RefSeq" id="XP_054175058.1">
    <molecule id="O15165-5"/>
    <property type="nucleotide sequence ID" value="XM_054319083.1"/>
</dbReference>
<dbReference type="RefSeq" id="XP_054175059.1">
    <molecule id="O15165-5"/>
    <property type="nucleotide sequence ID" value="XM_054319084.1"/>
</dbReference>
<dbReference type="RefSeq" id="XP_054175060.1">
    <molecule id="O15165-5"/>
    <property type="nucleotide sequence ID" value="XM_054319085.1"/>
</dbReference>
<dbReference type="RefSeq" id="XP_054175061.1">
    <molecule id="O15165-5"/>
    <property type="nucleotide sequence ID" value="XM_054319086.1"/>
</dbReference>
<dbReference type="BioGRID" id="107209">
    <property type="interactions" value="58"/>
</dbReference>
<dbReference type="FunCoup" id="O15165">
    <property type="interactions" value="484"/>
</dbReference>
<dbReference type="IntAct" id="O15165">
    <property type="interactions" value="47"/>
</dbReference>
<dbReference type="STRING" id="9606.ENSP00000352420"/>
<dbReference type="iPTMnet" id="O15165"/>
<dbReference type="PhosphoSitePlus" id="O15165"/>
<dbReference type="SwissPalm" id="O15165"/>
<dbReference type="BioMuta" id="LDLRAD4"/>
<dbReference type="MassIVE" id="O15165"/>
<dbReference type="PaxDb" id="9606-ENSP00000352420"/>
<dbReference type="PeptideAtlas" id="O15165"/>
<dbReference type="ProteomicsDB" id="19107"/>
<dbReference type="ProteomicsDB" id="48486">
    <molecule id="O15165-1"/>
</dbReference>
<dbReference type="ProteomicsDB" id="48487">
    <molecule id="O15165-2"/>
</dbReference>
<dbReference type="ProteomicsDB" id="48488">
    <molecule id="O15165-3"/>
</dbReference>
<dbReference type="ProteomicsDB" id="48489">
    <molecule id="O15165-4"/>
</dbReference>
<dbReference type="ProteomicsDB" id="48490">
    <molecule id="O15165-5"/>
</dbReference>
<dbReference type="ProteomicsDB" id="48491">
    <molecule id="O15165-6"/>
</dbReference>
<dbReference type="Antibodypedia" id="21959">
    <property type="antibodies" value="67 antibodies from 9 providers"/>
</dbReference>
<dbReference type="DNASU" id="753"/>
<dbReference type="Ensembl" id="ENST00000359446.11">
    <molecule id="O15165-1"/>
    <property type="protein sequence ID" value="ENSP00000352420.5"/>
    <property type="gene ID" value="ENSG00000168675.19"/>
</dbReference>
<dbReference type="Ensembl" id="ENST00000399848.7">
    <molecule id="O15165-2"/>
    <property type="protein sequence ID" value="ENSP00000382741.2"/>
    <property type="gene ID" value="ENSG00000168675.19"/>
</dbReference>
<dbReference type="Ensembl" id="ENST00000585931.5">
    <molecule id="O15165-5"/>
    <property type="protein sequence ID" value="ENSP00000466772.1"/>
    <property type="gene ID" value="ENSG00000168675.19"/>
</dbReference>
<dbReference type="Ensembl" id="ENST00000586765.1">
    <molecule id="O15165-7"/>
    <property type="protein sequence ID" value="ENSP00000474783.1"/>
    <property type="gene ID" value="ENSG00000168675.19"/>
</dbReference>
<dbReference type="Ensembl" id="ENST00000587757.5">
    <molecule id="O15165-6"/>
    <property type="protein sequence ID" value="ENSP00000466178.1"/>
    <property type="gene ID" value="ENSG00000168675.19"/>
</dbReference>
<dbReference type="Ensembl" id="ENST00000677744.1">
    <molecule id="O15165-5"/>
    <property type="protein sequence ID" value="ENSP00000504022.1"/>
    <property type="gene ID" value="ENSG00000168675.19"/>
</dbReference>
<dbReference type="Ensembl" id="ENST00000677910.1">
    <molecule id="O15165-5"/>
    <property type="protein sequence ID" value="ENSP00000503996.1"/>
    <property type="gene ID" value="ENSG00000168675.19"/>
</dbReference>
<dbReference type="Ensembl" id="ENST00000679091.1">
    <molecule id="O15165-1"/>
    <property type="protein sequence ID" value="ENSP00000503185.1"/>
    <property type="gene ID" value="ENSG00000168675.19"/>
</dbReference>
<dbReference type="GeneID" id="753"/>
<dbReference type="KEGG" id="hsa:753"/>
<dbReference type="MANE-Select" id="ENST00000359446.11">
    <property type="protein sequence ID" value="ENSP00000352420.5"/>
    <property type="RefSeq nucleotide sequence ID" value="NM_001378100.1"/>
    <property type="RefSeq protein sequence ID" value="NP_001365029.1"/>
</dbReference>
<dbReference type="UCSC" id="uc002ksb.4">
    <molecule id="O15165-1"/>
    <property type="organism name" value="human"/>
</dbReference>
<dbReference type="AGR" id="HGNC:1224"/>
<dbReference type="CTD" id="753"/>
<dbReference type="DisGeNET" id="753"/>
<dbReference type="GeneCards" id="LDLRAD4"/>
<dbReference type="HGNC" id="HGNC:1224">
    <property type="gene designation" value="LDLRAD4"/>
</dbReference>
<dbReference type="HPA" id="ENSG00000168675">
    <property type="expression patterns" value="Tissue enhanced (lymphoid)"/>
</dbReference>
<dbReference type="MIM" id="606571">
    <property type="type" value="gene"/>
</dbReference>
<dbReference type="neXtProt" id="NX_O15165"/>
<dbReference type="OpenTargets" id="ENSG00000168675"/>
<dbReference type="PharmGKB" id="PA25593"/>
<dbReference type="VEuPathDB" id="HostDB:ENSG00000168675"/>
<dbReference type="eggNOG" id="ENOG502QRYK">
    <property type="taxonomic scope" value="Eukaryota"/>
</dbReference>
<dbReference type="GeneTree" id="ENSGT00390000000724"/>
<dbReference type="HOGENOM" id="CLU_074371_0_1_1"/>
<dbReference type="InParanoid" id="O15165"/>
<dbReference type="OMA" id="RECKFTC"/>
<dbReference type="OrthoDB" id="10038550at2759"/>
<dbReference type="PAN-GO" id="O15165">
    <property type="GO annotations" value="6 GO annotations based on evolutionary models"/>
</dbReference>
<dbReference type="PhylomeDB" id="O15165"/>
<dbReference type="TreeFam" id="TF331681"/>
<dbReference type="PathwayCommons" id="O15165"/>
<dbReference type="SignaLink" id="O15165"/>
<dbReference type="BioGRID-ORCS" id="753">
    <property type="hits" value="14 hits in 1143 CRISPR screens"/>
</dbReference>
<dbReference type="ChiTaRS" id="LDLRAD4">
    <property type="organism name" value="human"/>
</dbReference>
<dbReference type="GenomeRNAi" id="753"/>
<dbReference type="Pharos" id="O15165">
    <property type="development level" value="Tbio"/>
</dbReference>
<dbReference type="PRO" id="PR:O15165"/>
<dbReference type="Proteomes" id="UP000005640">
    <property type="component" value="Chromosome 18"/>
</dbReference>
<dbReference type="RNAct" id="O15165">
    <property type="molecule type" value="protein"/>
</dbReference>
<dbReference type="Bgee" id="ENSG00000168675">
    <property type="expression patterns" value="Expressed in endothelial cell and 191 other cell types or tissues"/>
</dbReference>
<dbReference type="ExpressionAtlas" id="O15165">
    <property type="expression patterns" value="baseline and differential"/>
</dbReference>
<dbReference type="GO" id="GO:0031901">
    <property type="term" value="C:early endosome membrane"/>
    <property type="evidence" value="ECO:0000314"/>
    <property type="project" value="UniProtKB"/>
</dbReference>
<dbReference type="GO" id="GO:0000139">
    <property type="term" value="C:Golgi membrane"/>
    <property type="evidence" value="ECO:0000318"/>
    <property type="project" value="GO_Central"/>
</dbReference>
<dbReference type="GO" id="GO:0043231">
    <property type="term" value="C:intracellular membrane-bounded organelle"/>
    <property type="evidence" value="ECO:0000314"/>
    <property type="project" value="HPA"/>
</dbReference>
<dbReference type="GO" id="GO:0016020">
    <property type="term" value="C:membrane"/>
    <property type="evidence" value="ECO:0000303"/>
    <property type="project" value="UniProtKB"/>
</dbReference>
<dbReference type="GO" id="GO:0070412">
    <property type="term" value="F:R-SMAD binding"/>
    <property type="evidence" value="ECO:0000353"/>
    <property type="project" value="UniProtKB"/>
</dbReference>
<dbReference type="GO" id="GO:0030336">
    <property type="term" value="P:negative regulation of cell migration"/>
    <property type="evidence" value="ECO:0000315"/>
    <property type="project" value="UniProtKB"/>
</dbReference>
<dbReference type="GO" id="GO:0010719">
    <property type="term" value="P:negative regulation of epithelial to mesenchymal transition"/>
    <property type="evidence" value="ECO:0000315"/>
    <property type="project" value="UniProtKB"/>
</dbReference>
<dbReference type="GO" id="GO:0060392">
    <property type="term" value="P:negative regulation of SMAD protein signal transduction"/>
    <property type="evidence" value="ECO:0000314"/>
    <property type="project" value="UniProtKB"/>
</dbReference>
<dbReference type="GO" id="GO:0030512">
    <property type="term" value="P:negative regulation of transforming growth factor beta receptor signaling pathway"/>
    <property type="evidence" value="ECO:0000314"/>
    <property type="project" value="UniProtKB"/>
</dbReference>
<dbReference type="CDD" id="cd00112">
    <property type="entry name" value="LDLa"/>
    <property type="match status" value="1"/>
</dbReference>
<dbReference type="Gene3D" id="4.10.400.10">
    <property type="entry name" value="Low-density Lipoprotein Receptor"/>
    <property type="match status" value="1"/>
</dbReference>
<dbReference type="InterPro" id="IPR036055">
    <property type="entry name" value="LDL_receptor-like_sf"/>
</dbReference>
<dbReference type="InterPro" id="IPR023415">
    <property type="entry name" value="LDLR_class-A_CS"/>
</dbReference>
<dbReference type="InterPro" id="IPR002172">
    <property type="entry name" value="LDrepeatLR_classA_rpt"/>
</dbReference>
<dbReference type="InterPro" id="IPR043445">
    <property type="entry name" value="TMEPAI/LRAD4"/>
</dbReference>
<dbReference type="PANTHER" id="PTHR16514">
    <property type="entry name" value="LOW DENSITY LIPOPROTEIN RECEPTOR CLASS A DOMAIN-CONTAINING 4A"/>
    <property type="match status" value="1"/>
</dbReference>
<dbReference type="PANTHER" id="PTHR16514:SF4">
    <property type="entry name" value="LOW-DENSITY LIPOPROTEIN RECEPTOR CLASS A DOMAIN-CONTAINING PROTEIN 4"/>
    <property type="match status" value="1"/>
</dbReference>
<dbReference type="Pfam" id="PF00057">
    <property type="entry name" value="Ldl_recept_a"/>
    <property type="match status" value="1"/>
</dbReference>
<dbReference type="SMART" id="SM00192">
    <property type="entry name" value="LDLa"/>
    <property type="match status" value="1"/>
</dbReference>
<dbReference type="SUPFAM" id="SSF57424">
    <property type="entry name" value="LDL receptor-like module"/>
    <property type="match status" value="1"/>
</dbReference>
<dbReference type="PROSITE" id="PS01209">
    <property type="entry name" value="LDLRA_1"/>
    <property type="match status" value="1"/>
</dbReference>
<dbReference type="PROSITE" id="PS50068">
    <property type="entry name" value="LDLRA_2"/>
    <property type="match status" value="1"/>
</dbReference>
<reference key="1">
    <citation type="journal article" date="1998" name="Genomics">
        <title>Multiple transcriptional variants and RNA editing in C18orf1, a novel gene with LDLRA and transmembrane domains on 18p11.2.</title>
        <authorList>
            <person name="Yoshikawa T."/>
            <person name="Sanders A.R."/>
            <person name="Esterling L.E."/>
            <person name="Detera-Wadleigh S.D."/>
        </authorList>
    </citation>
    <scope>NUCLEOTIDE SEQUENCE [MRNA] (ISOFORMS ALPHA-1; ALPHA-2; BETA-1 AND BETA-2)</scope>
    <source>
        <tissue>Brain</tissue>
    </source>
</reference>
<reference key="2">
    <citation type="journal article" date="2004" name="Nat. Genet.">
        <title>Complete sequencing and characterization of 21,243 full-length human cDNAs.</title>
        <authorList>
            <person name="Ota T."/>
            <person name="Suzuki Y."/>
            <person name="Nishikawa T."/>
            <person name="Otsuki T."/>
            <person name="Sugiyama T."/>
            <person name="Irie R."/>
            <person name="Wakamatsu A."/>
            <person name="Hayashi K."/>
            <person name="Sato H."/>
            <person name="Nagai K."/>
            <person name="Kimura K."/>
            <person name="Makita H."/>
            <person name="Sekine M."/>
            <person name="Obayashi M."/>
            <person name="Nishi T."/>
            <person name="Shibahara T."/>
            <person name="Tanaka T."/>
            <person name="Ishii S."/>
            <person name="Yamamoto J."/>
            <person name="Saito K."/>
            <person name="Kawai Y."/>
            <person name="Isono Y."/>
            <person name="Nakamura Y."/>
            <person name="Nagahari K."/>
            <person name="Murakami K."/>
            <person name="Yasuda T."/>
            <person name="Iwayanagi T."/>
            <person name="Wagatsuma M."/>
            <person name="Shiratori A."/>
            <person name="Sudo H."/>
            <person name="Hosoiri T."/>
            <person name="Kaku Y."/>
            <person name="Kodaira H."/>
            <person name="Kondo H."/>
            <person name="Sugawara M."/>
            <person name="Takahashi M."/>
            <person name="Kanda K."/>
            <person name="Yokoi T."/>
            <person name="Furuya T."/>
            <person name="Kikkawa E."/>
            <person name="Omura Y."/>
            <person name="Abe K."/>
            <person name="Kamihara K."/>
            <person name="Katsuta N."/>
            <person name="Sato K."/>
            <person name="Tanikawa M."/>
            <person name="Yamazaki M."/>
            <person name="Ninomiya K."/>
            <person name="Ishibashi T."/>
            <person name="Yamashita H."/>
            <person name="Murakawa K."/>
            <person name="Fujimori K."/>
            <person name="Tanai H."/>
            <person name="Kimata M."/>
            <person name="Watanabe M."/>
            <person name="Hiraoka S."/>
            <person name="Chiba Y."/>
            <person name="Ishida S."/>
            <person name="Ono Y."/>
            <person name="Takiguchi S."/>
            <person name="Watanabe S."/>
            <person name="Yosida M."/>
            <person name="Hotuta T."/>
            <person name="Kusano J."/>
            <person name="Kanehori K."/>
            <person name="Takahashi-Fujii A."/>
            <person name="Hara H."/>
            <person name="Tanase T.-O."/>
            <person name="Nomura Y."/>
            <person name="Togiya S."/>
            <person name="Komai F."/>
            <person name="Hara R."/>
            <person name="Takeuchi K."/>
            <person name="Arita M."/>
            <person name="Imose N."/>
            <person name="Musashino K."/>
            <person name="Yuuki H."/>
            <person name="Oshima A."/>
            <person name="Sasaki N."/>
            <person name="Aotsuka S."/>
            <person name="Yoshikawa Y."/>
            <person name="Matsunawa H."/>
            <person name="Ichihara T."/>
            <person name="Shiohata N."/>
            <person name="Sano S."/>
            <person name="Moriya S."/>
            <person name="Momiyama H."/>
            <person name="Satoh N."/>
            <person name="Takami S."/>
            <person name="Terashima Y."/>
            <person name="Suzuki O."/>
            <person name="Nakagawa S."/>
            <person name="Senoh A."/>
            <person name="Mizoguchi H."/>
            <person name="Goto Y."/>
            <person name="Shimizu F."/>
            <person name="Wakebe H."/>
            <person name="Hishigaki H."/>
            <person name="Watanabe T."/>
            <person name="Sugiyama A."/>
            <person name="Takemoto M."/>
            <person name="Kawakami B."/>
            <person name="Yamazaki M."/>
            <person name="Watanabe K."/>
            <person name="Kumagai A."/>
            <person name="Itakura S."/>
            <person name="Fukuzumi Y."/>
            <person name="Fujimori Y."/>
            <person name="Komiyama M."/>
            <person name="Tashiro H."/>
            <person name="Tanigami A."/>
            <person name="Fujiwara T."/>
            <person name="Ono T."/>
            <person name="Yamada K."/>
            <person name="Fujii Y."/>
            <person name="Ozaki K."/>
            <person name="Hirao M."/>
            <person name="Ohmori Y."/>
            <person name="Kawabata A."/>
            <person name="Hikiji T."/>
            <person name="Kobatake N."/>
            <person name="Inagaki H."/>
            <person name="Ikema Y."/>
            <person name="Okamoto S."/>
            <person name="Okitani R."/>
            <person name="Kawakami T."/>
            <person name="Noguchi S."/>
            <person name="Itoh T."/>
            <person name="Shigeta K."/>
            <person name="Senba T."/>
            <person name="Matsumura K."/>
            <person name="Nakajima Y."/>
            <person name="Mizuno T."/>
            <person name="Morinaga M."/>
            <person name="Sasaki M."/>
            <person name="Togashi T."/>
            <person name="Oyama M."/>
            <person name="Hata H."/>
            <person name="Watanabe M."/>
            <person name="Komatsu T."/>
            <person name="Mizushima-Sugano J."/>
            <person name="Satoh T."/>
            <person name="Shirai Y."/>
            <person name="Takahashi Y."/>
            <person name="Nakagawa K."/>
            <person name="Okumura K."/>
            <person name="Nagase T."/>
            <person name="Nomura N."/>
            <person name="Kikuchi H."/>
            <person name="Masuho Y."/>
            <person name="Yamashita R."/>
            <person name="Nakai K."/>
            <person name="Yada T."/>
            <person name="Nakamura Y."/>
            <person name="Ohara O."/>
            <person name="Isogai T."/>
            <person name="Sugano S."/>
        </authorList>
    </citation>
    <scope>NUCLEOTIDE SEQUENCE [LARGE SCALE MRNA] (ISOFORM 6)</scope>
    <source>
        <tissue>Brain</tissue>
    </source>
</reference>
<reference key="3">
    <citation type="journal article" date="2005" name="Nature">
        <title>DNA sequence and analysis of human chromosome 18.</title>
        <authorList>
            <person name="Nusbaum C."/>
            <person name="Zody M.C."/>
            <person name="Borowsky M.L."/>
            <person name="Kamal M."/>
            <person name="Kodira C.D."/>
            <person name="Taylor T.D."/>
            <person name="Whittaker C.A."/>
            <person name="Chang J.L."/>
            <person name="Cuomo C.A."/>
            <person name="Dewar K."/>
            <person name="FitzGerald M.G."/>
            <person name="Yang X."/>
            <person name="Abouelleil A."/>
            <person name="Allen N.R."/>
            <person name="Anderson S."/>
            <person name="Bloom T."/>
            <person name="Bugalter B."/>
            <person name="Butler J."/>
            <person name="Cook A."/>
            <person name="DeCaprio D."/>
            <person name="Engels R."/>
            <person name="Garber M."/>
            <person name="Gnirke A."/>
            <person name="Hafez N."/>
            <person name="Hall J.L."/>
            <person name="Norman C.H."/>
            <person name="Itoh T."/>
            <person name="Jaffe D.B."/>
            <person name="Kuroki Y."/>
            <person name="Lehoczky J."/>
            <person name="Lui A."/>
            <person name="Macdonald P."/>
            <person name="Mauceli E."/>
            <person name="Mikkelsen T.S."/>
            <person name="Naylor J.W."/>
            <person name="Nicol R."/>
            <person name="Nguyen C."/>
            <person name="Noguchi H."/>
            <person name="O'Leary S.B."/>
            <person name="Piqani B."/>
            <person name="Smith C.L."/>
            <person name="Talamas J.A."/>
            <person name="Topham K."/>
            <person name="Totoki Y."/>
            <person name="Toyoda A."/>
            <person name="Wain H.M."/>
            <person name="Young S.K."/>
            <person name="Zeng Q."/>
            <person name="Zimmer A.R."/>
            <person name="Fujiyama A."/>
            <person name="Hattori M."/>
            <person name="Birren B.W."/>
            <person name="Sakaki Y."/>
            <person name="Lander E.S."/>
        </authorList>
    </citation>
    <scope>NUCLEOTIDE SEQUENCE [LARGE SCALE GENOMIC DNA]</scope>
</reference>
<reference key="4">
    <citation type="submission" date="2005-09" db="EMBL/GenBank/DDBJ databases">
        <authorList>
            <person name="Mural R.J."/>
            <person name="Istrail S."/>
            <person name="Sutton G.G."/>
            <person name="Florea L."/>
            <person name="Halpern A.L."/>
            <person name="Mobarry C.M."/>
            <person name="Lippert R."/>
            <person name="Walenz B."/>
            <person name="Shatkay H."/>
            <person name="Dew I."/>
            <person name="Miller J.R."/>
            <person name="Flanigan M.J."/>
            <person name="Edwards N.J."/>
            <person name="Bolanos R."/>
            <person name="Fasulo D."/>
            <person name="Halldorsson B.V."/>
            <person name="Hannenhalli S."/>
            <person name="Turner R."/>
            <person name="Yooseph S."/>
            <person name="Lu F."/>
            <person name="Nusskern D.R."/>
            <person name="Shue B.C."/>
            <person name="Zheng X.H."/>
            <person name="Zhong F."/>
            <person name="Delcher A.L."/>
            <person name="Huson D.H."/>
            <person name="Kravitz S.A."/>
            <person name="Mouchard L."/>
            <person name="Reinert K."/>
            <person name="Remington K.A."/>
            <person name="Clark A.G."/>
            <person name="Waterman M.S."/>
            <person name="Eichler E.E."/>
            <person name="Adams M.D."/>
            <person name="Hunkapiller M.W."/>
            <person name="Myers E.W."/>
            <person name="Venter J.C."/>
        </authorList>
    </citation>
    <scope>NUCLEOTIDE SEQUENCE [LARGE SCALE GENOMIC DNA]</scope>
</reference>
<reference key="5">
    <citation type="journal article" date="2004" name="Genome Res.">
        <title>The status, quality, and expansion of the NIH full-length cDNA project: the Mammalian Gene Collection (MGC).</title>
        <authorList>
            <consortium name="The MGC Project Team"/>
        </authorList>
    </citation>
    <scope>NUCLEOTIDE SEQUENCE [LARGE SCALE MRNA] (ISOFORMS ALPHA-2; 5 AND 8)</scope>
    <source>
        <tissue>Brain</tissue>
    </source>
</reference>
<reference key="6">
    <citation type="submission" date="2002-12" db="EMBL/GenBank/DDBJ databases">
        <authorList>
            <person name="Ebert L."/>
            <person name="Heil O."/>
            <person name="Hennig S."/>
            <person name="Neubert P."/>
            <person name="Partsch E."/>
            <person name="Peters M."/>
            <person name="Radelof U."/>
            <person name="Schneider D."/>
            <person name="Korn B."/>
        </authorList>
    </citation>
    <scope>NUCLEOTIDE SEQUENCE [LARGE SCALE MRNA] OF 6-251 (ISOFORM 7)</scope>
    <source>
        <tissue>Testis</tissue>
    </source>
</reference>
<reference key="7">
    <citation type="journal article" date="2009" name="J. Hum. Genet.">
        <title>Analysis of a t(18;21)(p11.1;p11.1) translocation in a family with schizophrenia.</title>
        <authorList>
            <person name="Meerabux J.M."/>
            <person name="Ohba H."/>
            <person name="Iwayama Y."/>
            <person name="Maekawa M."/>
            <person name="Detera-Wadleigh S.D."/>
            <person name="DeLisi L.E."/>
            <person name="Yoshikawa T."/>
        </authorList>
    </citation>
    <scope>TISSUE SPECIFICITY</scope>
</reference>
<reference key="8">
    <citation type="journal article" date="2014" name="J. Biol. Chem.">
        <title>C18 ORF1, a novel negative regulator of transforming growth factor-beta signaling.</title>
        <authorList>
            <person name="Nakano N."/>
            <person name="Maeyama K."/>
            <person name="Sakata N."/>
            <person name="Itoh F."/>
            <person name="Akatsu R."/>
            <person name="Nakata M."/>
            <person name="Katsu Y."/>
            <person name="Ikeno S."/>
            <person name="Togawa Y."/>
            <person name="Vo Nguyen T.T."/>
            <person name="Watanabe Y."/>
            <person name="Kato M."/>
            <person name="Itoh S."/>
        </authorList>
    </citation>
    <scope>FUNCTION</scope>
    <scope>INTERACTION WITH PMEPA1; SMAD2 AND SMAD3</scope>
    <scope>SUBCELLULAR LOCATION</scope>
    <scope>MOTIF</scope>
</reference>
<proteinExistence type="evidence at protein level"/>
<organism>
    <name type="scientific">Homo sapiens</name>
    <name type="common">Human</name>
    <dbReference type="NCBI Taxonomy" id="9606"/>
    <lineage>
        <taxon>Eukaryota</taxon>
        <taxon>Metazoa</taxon>
        <taxon>Chordata</taxon>
        <taxon>Craniata</taxon>
        <taxon>Vertebrata</taxon>
        <taxon>Euteleostomi</taxon>
        <taxon>Mammalia</taxon>
        <taxon>Eutheria</taxon>
        <taxon>Euarchontoglires</taxon>
        <taxon>Primates</taxon>
        <taxon>Haplorrhini</taxon>
        <taxon>Catarrhini</taxon>
        <taxon>Hominidae</taxon>
        <taxon>Homo</taxon>
    </lineage>
</organism>
<protein>
    <recommendedName>
        <fullName>Low-density lipoprotein receptor class A domain-containing protein 4</fullName>
    </recommendedName>
</protein>
<accession>O15165</accession>
<accession>B3KNT9</accession>
<accession>E9PAY9</accession>
<accession>K7EN38</accession>
<accession>O15166</accession>
<accession>O15167</accession>
<accession>O15168</accession>
<accession>Q5U646</accession>
<accession>Q6NXP3</accession>
<comment type="function">
    <text evidence="5">Functions as a negative regulator of TGF-beta signaling and thereby probably plays a role in cell proliferation, differentiation, apoptosis, motility, extracellular matrix production and immunosuppression. In the canonical TGF-beta pathway, ZFYVE9/SARA recruits the intracellular signal transducer and transcriptional modulators SMAD2 and SMAD3 to the TGF-beta receptor. Phosphorylated by the receptor, SMAD2 and SMAD3 then form a heteromeric complex with SMAD4 that translocates to the nucleus to regulate transcription. Through interaction with SMAD2 and SMAD3, LDLRAD4 may compete with ZFYVE9 and SMAD4 and prevent propagation of the intracellular signal.</text>
</comment>
<comment type="subunit">
    <text evidence="5">Interacts with PMEPA1. Interacts (via the SMAD interaction motif) with SMAD2 and SMAD3.</text>
</comment>
<comment type="interaction">
    <interactant intactId="EBI-9680883">
        <id>O15165</id>
    </interactant>
    <interactant intactId="EBI-726944">
        <id>P46934</id>
        <label>NEDD4</label>
    </interactant>
    <organismsDiffer>false</organismsDiffer>
    <experiments>4</experiments>
</comment>
<comment type="interaction">
    <interactant intactId="EBI-13302279">
        <id>O15165-2</id>
    </interactant>
    <interactant intactId="EBI-2515857">
        <id>O43681</id>
        <label>GET3</label>
    </interactant>
    <organismsDiffer>false</organismsDiffer>
    <experiments>3</experiments>
</comment>
<comment type="interaction">
    <interactant intactId="EBI-13302279">
        <id>O15165-2</id>
    </interactant>
    <interactant intactId="EBI-347996">
        <id>O43765</id>
        <label>SGTA</label>
    </interactant>
    <organismsDiffer>false</organismsDiffer>
    <experiments>3</experiments>
</comment>
<comment type="interaction">
    <interactant intactId="EBI-13302279">
        <id>O15165-2</id>
    </interactant>
    <interactant intactId="EBI-10268111">
        <id>Q8N966</id>
        <label>ZDHHC22</label>
    </interactant>
    <organismsDiffer>false</organismsDiffer>
    <experiments>3</experiments>
</comment>
<comment type="subcellular location">
    <subcellularLocation>
        <location evidence="5">Early endosome membrane</location>
        <topology evidence="5">Single-pass membrane protein</topology>
    </subcellularLocation>
</comment>
<comment type="alternative products">
    <event type="alternative splicing"/>
    <isoform>
        <id>O15165-1</id>
        <name>Alpha-1</name>
        <sequence type="displayed"/>
    </isoform>
    <isoform>
        <id>O15165-2</id>
        <name>Alpha-2</name>
        <sequence type="described" ref="VSP_006440"/>
    </isoform>
    <isoform>
        <id>O15165-3</id>
        <name>Beta-1</name>
        <sequence type="described" ref="VSP_006439"/>
    </isoform>
    <isoform>
        <id>O15165-4</id>
        <name>Beta-2</name>
        <sequence type="described" ref="VSP_006439 VSP_006440"/>
    </isoform>
    <isoform>
        <id>O15165-5</id>
        <name>5</name>
        <sequence type="described" ref="VSP_013901"/>
    </isoform>
    <isoform>
        <id>O15165-6</id>
        <name>6</name>
        <sequence type="described" ref="VSP_043253"/>
    </isoform>
    <isoform>
        <id>O15165-7</id>
        <name>7</name>
        <sequence type="described" ref="VSP_043253 VSP_006440"/>
    </isoform>
    <isoform>
        <id>O15165-8</id>
        <name>8</name>
        <sequence type="described" ref="VSP_054772"/>
    </isoform>
</comment>
<comment type="tissue specificity">
    <text evidence="4">Expressed in lymphocytes.</text>
</comment>
<comment type="domain">
    <text evidence="5">The SMAD interaction motif is required for interaction with SMAD2 and SMAD3 and the negative regulation of TGF-beta signaling.</text>
</comment>
<comment type="similarity">
    <text evidence="10">Belongs to the PMEPA1 family.</text>
</comment>
<sequence length="306" mass="33900">MPEAGFQATNAFTECKFTCTSGKCLYLGSLVCNQQNDCGDNSDEENCLLVTEHPPPGIFNSELEFAQIIIIVVVVTVMVVVIVCLLNHYKVSTRSFINRPNQSRRREDGLPQEGCLWPSDSAAPRLGASEIMHAPRSRDRFTAPSFIQRDRFSRFQPTYPYVQHEIDLPPTISLSDGEEPPPYQGPCTLQLRDPEQQMELNRESVRAPPNRTIFDSDLIDIAMYSGGPCPPSSNSGISASTCSSNGRMEGPPPTYSEVMGHHPGASFLHHQRSNAHRGSRLQFQQNNAESTIVPIKGKDRKPGNLV</sequence>
<feature type="chain" id="PRO_0000185444" description="Low-density lipoprotein receptor class A domain-containing protein 4">
    <location>
        <begin position="1"/>
        <end position="306"/>
    </location>
</feature>
<feature type="topological domain" description="Lumenal" evidence="1">
    <location>
        <begin position="1"/>
        <end position="64"/>
    </location>
</feature>
<feature type="transmembrane region" description="Helical" evidence="1">
    <location>
        <begin position="65"/>
        <end position="85"/>
    </location>
</feature>
<feature type="topological domain" description="Cytoplasmic" evidence="1">
    <location>
        <begin position="86"/>
        <end position="306"/>
    </location>
</feature>
<feature type="domain" description="LDL-receptor class A" evidence="2">
    <location>
        <begin position="16"/>
        <end position="48"/>
    </location>
</feature>
<feature type="region of interest" description="Disordered" evidence="3">
    <location>
        <begin position="286"/>
        <end position="306"/>
    </location>
</feature>
<feature type="short sequence motif" description="PPxY motif 1">
    <location>
        <begin position="180"/>
        <end position="183"/>
    </location>
</feature>
<feature type="short sequence motif" description="SMAD interaction motif (SIM)">
    <location>
        <begin position="208"/>
        <end position="211"/>
    </location>
</feature>
<feature type="short sequence motif" description="PPxY motif 2">
    <location>
        <begin position="252"/>
        <end position="255"/>
    </location>
</feature>
<feature type="compositionally biased region" description="Basic and acidic residues" evidence="3">
    <location>
        <begin position="296"/>
        <end position="306"/>
    </location>
</feature>
<feature type="disulfide bond" evidence="2">
    <location>
        <begin position="19"/>
        <end position="38"/>
    </location>
</feature>
<feature type="disulfide bond" evidence="2">
    <location>
        <begin position="32"/>
        <end position="47"/>
    </location>
</feature>
<feature type="splice variant" id="VSP_054772" description="In isoform 8." evidence="7">
    <original>MPEAGFQATNAFTECKFTCTSGKCLYLGSLVCNQQNDCGDNSDEENCLLVTEHPPPGIFNSELEFAQIIIIVVVVTVMVVVIVCLLNHYKVSTRSFINRPNQSRRREDGLP</original>
    <variation>MRLDSHLECISST</variation>
    <location>
        <begin position="1"/>
        <end position="111"/>
    </location>
</feature>
<feature type="splice variant" id="VSP_013901" description="In isoform 5." evidence="7">
    <location>
        <begin position="1"/>
        <end position="77"/>
    </location>
</feature>
<feature type="splice variant" id="VSP_043253" description="In isoform 6 and isoform 7." evidence="6 9">
    <original>MPEAGFQATNAFTECKFTCTSGKCLYLGSLVCNQQNDCGDNSDEENCLLVTEHPPPGIFNS</original>
    <variation>MSSDHLNNSTLKEAQFKDLFLKKA</variation>
    <location>
        <begin position="1"/>
        <end position="61"/>
    </location>
</feature>
<feature type="splice variant" id="VSP_006439" description="In isoform Beta-1 and isoform Beta-2." evidence="8">
    <original>MPEAGFQATNAFTECKFTCTSGKCLYLGSLVCNQQNDCGDNSDEENCLLVTEHPPPGIFNS</original>
    <variation>MAA</variation>
    <location>
        <begin position="1"/>
        <end position="61"/>
    </location>
</feature>
<feature type="splice variant" id="VSP_006440" description="In isoform Alpha-2, isoform Beta-2 and isoform 7." evidence="7 8 9">
    <location>
        <begin position="113"/>
        <end position="130"/>
    </location>
</feature>
<feature type="sequence conflict" description="In Ref. 5; AAH66971." evidence="10" ref="5">
    <original>R</original>
    <variation>Q</variation>
    <location>
        <position position="125"/>
    </location>
</feature>
<feature type="sequence conflict" description="In Ref. 5; AAH66971." evidence="10" ref="5">
    <original>P</original>
    <variation>T</variation>
    <location>
        <position position="135"/>
    </location>
</feature>
<feature type="sequence conflict" description="In Ref. 5; AAH66971." evidence="10" ref="5">
    <original>P</original>
    <variation>T</variation>
    <location>
        <position position="194"/>
    </location>
</feature>
<keyword id="KW-0025">Alternative splicing</keyword>
<keyword id="KW-1015">Disulfide bond</keyword>
<keyword id="KW-0967">Endosome</keyword>
<keyword id="KW-0472">Membrane</keyword>
<keyword id="KW-1267">Proteomics identification</keyword>
<keyword id="KW-1185">Reference proteome</keyword>
<keyword id="KW-0734">Signal transduction inhibitor</keyword>
<keyword id="KW-0812">Transmembrane</keyword>
<keyword id="KW-1133">Transmembrane helix</keyword>
<gene>
    <name type="primary">LDLRAD4</name>
    <name type="synonym">C18orf1</name>
</gene>
<evidence type="ECO:0000255" key="1"/>
<evidence type="ECO:0000255" key="2">
    <source>
        <dbReference type="PROSITE-ProRule" id="PRU00124"/>
    </source>
</evidence>
<evidence type="ECO:0000256" key="3">
    <source>
        <dbReference type="SAM" id="MobiDB-lite"/>
    </source>
</evidence>
<evidence type="ECO:0000269" key="4">
    <source>
    </source>
</evidence>
<evidence type="ECO:0000269" key="5">
    <source>
    </source>
</evidence>
<evidence type="ECO:0000303" key="6">
    <source>
    </source>
</evidence>
<evidence type="ECO:0000303" key="7">
    <source>
    </source>
</evidence>
<evidence type="ECO:0000303" key="8">
    <source>
    </source>
</evidence>
<evidence type="ECO:0000303" key="9">
    <source ref="6"/>
</evidence>
<evidence type="ECO:0000305" key="10"/>